<keyword id="KW-0025">Alternative splicing</keyword>
<keyword id="KW-0067">ATP-binding</keyword>
<keyword id="KW-0418">Kinase</keyword>
<keyword id="KW-0547">Nucleotide-binding</keyword>
<keyword id="KW-0597">Phosphoprotein</keyword>
<keyword id="KW-1185">Reference proteome</keyword>
<keyword id="KW-0723">Serine/threonine-protein kinase</keyword>
<keyword id="KW-0808">Transferase</keyword>
<accession>O80719</accession>
<accession>Q27GL0</accession>
<accession>Q2V401</accession>
<accession>Q3EBE8</accession>
<comment type="catalytic activity">
    <reaction>
        <text>L-seryl-[protein] + ATP = O-phospho-L-seryl-[protein] + ADP + H(+)</text>
        <dbReference type="Rhea" id="RHEA:17989"/>
        <dbReference type="Rhea" id="RHEA-COMP:9863"/>
        <dbReference type="Rhea" id="RHEA-COMP:11604"/>
        <dbReference type="ChEBI" id="CHEBI:15378"/>
        <dbReference type="ChEBI" id="CHEBI:29999"/>
        <dbReference type="ChEBI" id="CHEBI:30616"/>
        <dbReference type="ChEBI" id="CHEBI:83421"/>
        <dbReference type="ChEBI" id="CHEBI:456216"/>
        <dbReference type="EC" id="2.7.11.1"/>
    </reaction>
</comment>
<comment type="catalytic activity">
    <reaction>
        <text>L-threonyl-[protein] + ATP = O-phospho-L-threonyl-[protein] + ADP + H(+)</text>
        <dbReference type="Rhea" id="RHEA:46608"/>
        <dbReference type="Rhea" id="RHEA-COMP:11060"/>
        <dbReference type="Rhea" id="RHEA-COMP:11605"/>
        <dbReference type="ChEBI" id="CHEBI:15378"/>
        <dbReference type="ChEBI" id="CHEBI:30013"/>
        <dbReference type="ChEBI" id="CHEBI:30616"/>
        <dbReference type="ChEBI" id="CHEBI:61977"/>
        <dbReference type="ChEBI" id="CHEBI:456216"/>
        <dbReference type="EC" id="2.7.11.1"/>
    </reaction>
</comment>
<comment type="interaction">
    <interactant intactId="EBI-4436376">
        <id>O80719</id>
    </interactant>
    <interactant intactId="EBI-349526">
        <id>Q39023</id>
        <label>MPK3</label>
    </interactant>
    <organismsDiffer>false</organismsDiffer>
    <experiments>2</experiments>
</comment>
<comment type="interaction">
    <interactant intactId="EBI-4436376">
        <id>O80719</id>
    </interactant>
    <interactant intactId="EBI-349548">
        <id>Q39026</id>
        <label>MPK6</label>
    </interactant>
    <organismsDiffer>false</organismsDiffer>
    <experiments>3</experiments>
</comment>
<comment type="interaction">
    <interactant intactId="EBI-4436376">
        <id>O80719</id>
    </interactant>
    <interactant intactId="EBI-8574783">
        <id>Q9LSF1</id>
        <label>OXI1</label>
    </interactant>
    <organismsDiffer>false</organismsDiffer>
    <experiments>4</experiments>
</comment>
<comment type="alternative products">
    <event type="alternative splicing"/>
    <isoform>
        <id>O80719-1</id>
        <name>1</name>
        <sequence type="displayed"/>
    </isoform>
    <isoform>
        <id>O80719-2</id>
        <name>2</name>
        <sequence type="described" ref="VSP_038437 VSP_038438"/>
    </isoform>
    <isoform>
        <id>O80719-3</id>
        <name>3</name>
        <sequence type="described" ref="VSP_038439"/>
    </isoform>
</comment>
<comment type="similarity">
    <text evidence="2">Belongs to the protein kinase superfamily. Ser/Thr protein kinase family.</text>
</comment>
<organism>
    <name type="scientific">Arabidopsis thaliana</name>
    <name type="common">Mouse-ear cress</name>
    <dbReference type="NCBI Taxonomy" id="3702"/>
    <lineage>
        <taxon>Eukaryota</taxon>
        <taxon>Viridiplantae</taxon>
        <taxon>Streptophyta</taxon>
        <taxon>Embryophyta</taxon>
        <taxon>Tracheophyta</taxon>
        <taxon>Spermatophyta</taxon>
        <taxon>Magnoliopsida</taxon>
        <taxon>eudicotyledons</taxon>
        <taxon>Gunneridae</taxon>
        <taxon>Pentapetalae</taxon>
        <taxon>rosids</taxon>
        <taxon>malvids</taxon>
        <taxon>Brassicales</taxon>
        <taxon>Brassicaceae</taxon>
        <taxon>Camelineae</taxon>
        <taxon>Arabidopsis</taxon>
    </lineage>
</organism>
<gene>
    <name type="ordered locus">At2g47060</name>
    <name type="ORF">F14M4.11</name>
</gene>
<feature type="chain" id="PRO_0000389471" description="Probable receptor-like protein kinase At2g47060">
    <location>
        <begin position="1"/>
        <end position="365"/>
    </location>
</feature>
<feature type="domain" description="Protein kinase" evidence="2">
    <location>
        <begin position="73"/>
        <end position="353"/>
    </location>
</feature>
<feature type="region of interest" description="Disordered" evidence="4">
    <location>
        <begin position="18"/>
        <end position="48"/>
    </location>
</feature>
<feature type="active site" description="Proton acceptor" evidence="2 3">
    <location>
        <position position="203"/>
    </location>
</feature>
<feature type="binding site" evidence="2">
    <location>
        <begin position="79"/>
        <end position="87"/>
    </location>
    <ligand>
        <name>ATP</name>
        <dbReference type="ChEBI" id="CHEBI:30616"/>
    </ligand>
</feature>
<feature type="binding site" evidence="2">
    <location>
        <position position="101"/>
    </location>
    <ligand>
        <name>ATP</name>
        <dbReference type="ChEBI" id="CHEBI:30616"/>
    </ligand>
</feature>
<feature type="modified residue" description="Phosphotyrosine" evidence="1">
    <location>
        <position position="145"/>
    </location>
</feature>
<feature type="modified residue" description="Phosphoserine" evidence="1">
    <location>
        <position position="207"/>
    </location>
</feature>
<feature type="modified residue" description="Phosphoserine" evidence="1">
    <location>
        <position position="237"/>
    </location>
</feature>
<feature type="modified residue" description="Phosphothreonine" evidence="1">
    <location>
        <position position="238"/>
    </location>
</feature>
<feature type="modified residue" description="Phosphothreonine" evidence="1">
    <location>
        <position position="243"/>
    </location>
</feature>
<feature type="modified residue" description="Phosphotyrosine" evidence="1">
    <location>
        <position position="251"/>
    </location>
</feature>
<feature type="splice variant" id="VSP_038437" description="In isoform 2." evidence="5">
    <location>
        <begin position="1"/>
        <end position="99"/>
    </location>
</feature>
<feature type="splice variant" id="VSP_038438" description="In isoform 2." evidence="5">
    <original>IKKLDSNKQPDNEFLAQVSMVS</original>
    <variation>MICLQRLKSWILTNSLTMNSLL</variation>
    <location>
        <begin position="100"/>
        <end position="121"/>
    </location>
</feature>
<feature type="splice variant" id="VSP_038439" description="In isoform 3." evidence="5">
    <original>K</original>
    <variation>KVRNQTFHNLRLCLRFRLHSLFLTSSYGDDDSQ</variation>
    <location>
        <position position="323"/>
    </location>
</feature>
<evidence type="ECO:0000250" key="1">
    <source>
        <dbReference type="UniProtKB" id="O48814"/>
    </source>
</evidence>
<evidence type="ECO:0000255" key="2">
    <source>
        <dbReference type="PROSITE-ProRule" id="PRU00159"/>
    </source>
</evidence>
<evidence type="ECO:0000255" key="3">
    <source>
        <dbReference type="PROSITE-ProRule" id="PRU10027"/>
    </source>
</evidence>
<evidence type="ECO:0000256" key="4">
    <source>
        <dbReference type="SAM" id="MobiDB-lite"/>
    </source>
</evidence>
<evidence type="ECO:0000305" key="5"/>
<proteinExistence type="evidence at protein level"/>
<sequence>MSCFGCCGEDDDMHKTADYGGRHNQAKHFPPGNDARHHQASETAQKGPPVVKLQPIEVPIIPFSELKEATDDFGSNSLIGEGSYGRVYYGVLNNDLPSAIKKLDSNKQPDNEFLAQVSMVSRLKHDNFVQLLGYCVDGNSRILSYEFANNGSLHDILHGRKGVKGAQPGPVLSWYQRVKIAVGAARGLEYLHEKANPHIIHRDIKSSNVLLFEDDVAKIADFDLSNQAPDMAARLHSTRVLGTFGYHAPEYAMTGQLNAKSDVYSFGVVLLELLTGRKPVDHRLPRGQQSLVTWATPKLSEDKVKQCVDARLGGDYPPKAVAKLAAVAALCVQYEADFRPNMSIVVKALQPLLNARAVAPGEGVH</sequence>
<reference key="1">
    <citation type="journal article" date="1999" name="Nature">
        <title>Sequence and analysis of chromosome 2 of the plant Arabidopsis thaliana.</title>
        <authorList>
            <person name="Lin X."/>
            <person name="Kaul S."/>
            <person name="Rounsley S.D."/>
            <person name="Shea T.P."/>
            <person name="Benito M.-I."/>
            <person name="Town C.D."/>
            <person name="Fujii C.Y."/>
            <person name="Mason T.M."/>
            <person name="Bowman C.L."/>
            <person name="Barnstead M.E."/>
            <person name="Feldblyum T.V."/>
            <person name="Buell C.R."/>
            <person name="Ketchum K.A."/>
            <person name="Lee J.J."/>
            <person name="Ronning C.M."/>
            <person name="Koo H.L."/>
            <person name="Moffat K.S."/>
            <person name="Cronin L.A."/>
            <person name="Shen M."/>
            <person name="Pai G."/>
            <person name="Van Aken S."/>
            <person name="Umayam L."/>
            <person name="Tallon L.J."/>
            <person name="Gill J.E."/>
            <person name="Adams M.D."/>
            <person name="Carrera A.J."/>
            <person name="Creasy T.H."/>
            <person name="Goodman H.M."/>
            <person name="Somerville C.R."/>
            <person name="Copenhaver G.P."/>
            <person name="Preuss D."/>
            <person name="Nierman W.C."/>
            <person name="White O."/>
            <person name="Eisen J.A."/>
            <person name="Salzberg S.L."/>
            <person name="Fraser C.M."/>
            <person name="Venter J.C."/>
        </authorList>
    </citation>
    <scope>NUCLEOTIDE SEQUENCE [LARGE SCALE GENOMIC DNA]</scope>
    <source>
        <strain>cv. Columbia</strain>
    </source>
</reference>
<reference key="2">
    <citation type="journal article" date="2017" name="Plant J.">
        <title>Araport11: a complete reannotation of the Arabidopsis thaliana reference genome.</title>
        <authorList>
            <person name="Cheng C.Y."/>
            <person name="Krishnakumar V."/>
            <person name="Chan A.P."/>
            <person name="Thibaud-Nissen F."/>
            <person name="Schobel S."/>
            <person name="Town C.D."/>
        </authorList>
    </citation>
    <scope>GENOME REANNOTATION</scope>
    <source>
        <strain>cv. Columbia</strain>
    </source>
</reference>
<reference key="3">
    <citation type="journal article" date="2003" name="Science">
        <title>Empirical analysis of transcriptional activity in the Arabidopsis genome.</title>
        <authorList>
            <person name="Yamada K."/>
            <person name="Lim J."/>
            <person name="Dale J.M."/>
            <person name="Chen H."/>
            <person name="Shinn P."/>
            <person name="Palm C.J."/>
            <person name="Southwick A.M."/>
            <person name="Wu H.C."/>
            <person name="Kim C.J."/>
            <person name="Nguyen M."/>
            <person name="Pham P.K."/>
            <person name="Cheuk R.F."/>
            <person name="Karlin-Newmann G."/>
            <person name="Liu S.X."/>
            <person name="Lam B."/>
            <person name="Sakano H."/>
            <person name="Wu T."/>
            <person name="Yu G."/>
            <person name="Miranda M."/>
            <person name="Quach H.L."/>
            <person name="Tripp M."/>
            <person name="Chang C.H."/>
            <person name="Lee J.M."/>
            <person name="Toriumi M.J."/>
            <person name="Chan M.M."/>
            <person name="Tang C.C."/>
            <person name="Onodera C.S."/>
            <person name="Deng J.M."/>
            <person name="Akiyama K."/>
            <person name="Ansari Y."/>
            <person name="Arakawa T."/>
            <person name="Banh J."/>
            <person name="Banno F."/>
            <person name="Bowser L."/>
            <person name="Brooks S.Y."/>
            <person name="Carninci P."/>
            <person name="Chao Q."/>
            <person name="Choy N."/>
            <person name="Enju A."/>
            <person name="Goldsmith A.D."/>
            <person name="Gurjal M."/>
            <person name="Hansen N.F."/>
            <person name="Hayashizaki Y."/>
            <person name="Johnson-Hopson C."/>
            <person name="Hsuan V.W."/>
            <person name="Iida K."/>
            <person name="Karnes M."/>
            <person name="Khan S."/>
            <person name="Koesema E."/>
            <person name="Ishida J."/>
            <person name="Jiang P.X."/>
            <person name="Jones T."/>
            <person name="Kawai J."/>
            <person name="Kamiya A."/>
            <person name="Meyers C."/>
            <person name="Nakajima M."/>
            <person name="Narusaka M."/>
            <person name="Seki M."/>
            <person name="Sakurai T."/>
            <person name="Satou M."/>
            <person name="Tamse R."/>
            <person name="Vaysberg M."/>
            <person name="Wallender E.K."/>
            <person name="Wong C."/>
            <person name="Yamamura Y."/>
            <person name="Yuan S."/>
            <person name="Shinozaki K."/>
            <person name="Davis R.W."/>
            <person name="Theologis A."/>
            <person name="Ecker J.R."/>
        </authorList>
    </citation>
    <scope>NUCLEOTIDE SEQUENCE [LARGE SCALE MRNA] (ISOFORM 1)</scope>
    <source>
        <strain>cv. Columbia</strain>
    </source>
</reference>
<reference key="4">
    <citation type="submission" date="2000-11" db="EMBL/GenBank/DDBJ databases">
        <authorList>
            <person name="Southwick A."/>
            <person name="Karlin-Neumann G."/>
            <person name="Nguyen M."/>
            <person name="Lam B."/>
            <person name="Miranda M."/>
            <person name="Palm C.J."/>
            <person name="Theologis A."/>
            <person name="Ecker J."/>
            <person name="Davis R.W."/>
        </authorList>
    </citation>
    <scope>NUCLEOTIDE SEQUENCE [LARGE SCALE MRNA] (ISOFORM 1)</scope>
</reference>
<dbReference type="EC" id="2.7.11.1"/>
<dbReference type="EMBL" id="AC004411">
    <property type="protein sequence ID" value="AAC34243.1"/>
    <property type="molecule type" value="Genomic_DNA"/>
</dbReference>
<dbReference type="EMBL" id="CP002685">
    <property type="protein sequence ID" value="AEC10793.1"/>
    <property type="molecule type" value="Genomic_DNA"/>
</dbReference>
<dbReference type="EMBL" id="CP002685">
    <property type="protein sequence ID" value="AEC10794.1"/>
    <property type="molecule type" value="Genomic_DNA"/>
</dbReference>
<dbReference type="EMBL" id="CP002685">
    <property type="protein sequence ID" value="AEC10795.1"/>
    <property type="molecule type" value="Genomic_DNA"/>
</dbReference>
<dbReference type="EMBL" id="CP002685">
    <property type="protein sequence ID" value="AEC10796.1"/>
    <property type="molecule type" value="Genomic_DNA"/>
</dbReference>
<dbReference type="EMBL" id="AY080876">
    <property type="protein sequence ID" value="AAL87347.1"/>
    <property type="molecule type" value="mRNA"/>
</dbReference>
<dbReference type="EMBL" id="AY114044">
    <property type="protein sequence ID" value="AAM45092.1"/>
    <property type="molecule type" value="mRNA"/>
</dbReference>
<dbReference type="EMBL" id="AF325090">
    <property type="protein sequence ID" value="AAK17158.1"/>
    <property type="molecule type" value="mRNA"/>
</dbReference>
<dbReference type="PIR" id="T02181">
    <property type="entry name" value="T02181"/>
</dbReference>
<dbReference type="RefSeq" id="NP_001031552.1">
    <molecule id="O80719-2"/>
    <property type="nucleotide sequence ID" value="NM_001036475.1"/>
</dbReference>
<dbReference type="RefSeq" id="NP_001031553.1">
    <molecule id="O80719-3"/>
    <property type="nucleotide sequence ID" value="NM_001036476.1"/>
</dbReference>
<dbReference type="RefSeq" id="NP_182229.1">
    <molecule id="O80719-1"/>
    <property type="nucleotide sequence ID" value="NM_130274.4"/>
</dbReference>
<dbReference type="RefSeq" id="NP_850467.2">
    <molecule id="O80719-1"/>
    <property type="nucleotide sequence ID" value="NM_180136.3"/>
</dbReference>
<dbReference type="SMR" id="O80719"/>
<dbReference type="BioGRID" id="4655">
    <property type="interactions" value="9"/>
</dbReference>
<dbReference type="FunCoup" id="O80719">
    <property type="interactions" value="256"/>
</dbReference>
<dbReference type="IntAct" id="O80719">
    <property type="interactions" value="5"/>
</dbReference>
<dbReference type="MINT" id="O80719"/>
<dbReference type="STRING" id="3702.O80719"/>
<dbReference type="SwissPalm" id="O80719"/>
<dbReference type="PaxDb" id="3702-AT2G47060.4"/>
<dbReference type="EnsemblPlants" id="AT2G47060.1">
    <molecule id="O80719-1"/>
    <property type="protein sequence ID" value="AT2G47060.1"/>
    <property type="gene ID" value="AT2G47060"/>
</dbReference>
<dbReference type="EnsemblPlants" id="AT2G47060.2">
    <molecule id="O80719-1"/>
    <property type="protein sequence ID" value="AT2G47060.2"/>
    <property type="gene ID" value="AT2G47060"/>
</dbReference>
<dbReference type="EnsemblPlants" id="AT2G47060.3">
    <molecule id="O80719-2"/>
    <property type="protein sequence ID" value="AT2G47060.3"/>
    <property type="gene ID" value="AT2G47060"/>
</dbReference>
<dbReference type="EnsemblPlants" id="AT2G47060.4">
    <molecule id="O80719-3"/>
    <property type="protein sequence ID" value="AT2G47060.4"/>
    <property type="gene ID" value="AT2G47060"/>
</dbReference>
<dbReference type="GeneID" id="819320"/>
<dbReference type="Gramene" id="AT2G47060.1">
    <molecule id="O80719-1"/>
    <property type="protein sequence ID" value="AT2G47060.1"/>
    <property type="gene ID" value="AT2G47060"/>
</dbReference>
<dbReference type="Gramene" id="AT2G47060.2">
    <molecule id="O80719-1"/>
    <property type="protein sequence ID" value="AT2G47060.2"/>
    <property type="gene ID" value="AT2G47060"/>
</dbReference>
<dbReference type="Gramene" id="AT2G47060.3">
    <molecule id="O80719-2"/>
    <property type="protein sequence ID" value="AT2G47060.3"/>
    <property type="gene ID" value="AT2G47060"/>
</dbReference>
<dbReference type="Gramene" id="AT2G47060.4">
    <molecule id="O80719-3"/>
    <property type="protein sequence ID" value="AT2G47060.4"/>
    <property type="gene ID" value="AT2G47060"/>
</dbReference>
<dbReference type="KEGG" id="ath:AT2G47060"/>
<dbReference type="Araport" id="AT2G47060"/>
<dbReference type="TAIR" id="AT2G47060">
    <property type="gene designation" value="PTI1-4"/>
</dbReference>
<dbReference type="eggNOG" id="KOG1187">
    <property type="taxonomic scope" value="Eukaryota"/>
</dbReference>
<dbReference type="InParanoid" id="O80719"/>
<dbReference type="OMA" id="FITTINH"/>
<dbReference type="OrthoDB" id="4062651at2759"/>
<dbReference type="PhylomeDB" id="O80719"/>
<dbReference type="PRO" id="PR:O80719"/>
<dbReference type="Proteomes" id="UP000006548">
    <property type="component" value="Chromosome 2"/>
</dbReference>
<dbReference type="ExpressionAtlas" id="O80719">
    <property type="expression patterns" value="baseline and differential"/>
</dbReference>
<dbReference type="GO" id="GO:0005829">
    <property type="term" value="C:cytosol"/>
    <property type="evidence" value="ECO:0007005"/>
    <property type="project" value="TAIR"/>
</dbReference>
<dbReference type="GO" id="GO:0005524">
    <property type="term" value="F:ATP binding"/>
    <property type="evidence" value="ECO:0007669"/>
    <property type="project" value="UniProtKB-KW"/>
</dbReference>
<dbReference type="GO" id="GO:0106310">
    <property type="term" value="F:protein serine kinase activity"/>
    <property type="evidence" value="ECO:0007669"/>
    <property type="project" value="RHEA"/>
</dbReference>
<dbReference type="GO" id="GO:0004674">
    <property type="term" value="F:protein serine/threonine kinase activity"/>
    <property type="evidence" value="ECO:0007669"/>
    <property type="project" value="UniProtKB-KW"/>
</dbReference>
<dbReference type="GO" id="GO:0006979">
    <property type="term" value="P:response to oxidative stress"/>
    <property type="evidence" value="ECO:0000270"/>
    <property type="project" value="TAIR"/>
</dbReference>
<dbReference type="CDD" id="cd14066">
    <property type="entry name" value="STKc_IRAK"/>
    <property type="match status" value="1"/>
</dbReference>
<dbReference type="FunFam" id="3.30.200.20:FF:000182">
    <property type="entry name" value="PTI1-like tyrosine-protein kinase 3"/>
    <property type="match status" value="1"/>
</dbReference>
<dbReference type="FunFam" id="1.10.510.10:FF:000195">
    <property type="entry name" value="pto-interacting protein 1"/>
    <property type="match status" value="1"/>
</dbReference>
<dbReference type="Gene3D" id="3.30.200.20">
    <property type="entry name" value="Phosphorylase Kinase, domain 1"/>
    <property type="match status" value="1"/>
</dbReference>
<dbReference type="Gene3D" id="1.10.510.10">
    <property type="entry name" value="Transferase(Phosphotransferase) domain 1"/>
    <property type="match status" value="1"/>
</dbReference>
<dbReference type="InterPro" id="IPR011009">
    <property type="entry name" value="Kinase-like_dom_sf"/>
</dbReference>
<dbReference type="InterPro" id="IPR052101">
    <property type="entry name" value="Plant_StressResp_Kinase"/>
</dbReference>
<dbReference type="InterPro" id="IPR000719">
    <property type="entry name" value="Prot_kinase_dom"/>
</dbReference>
<dbReference type="InterPro" id="IPR017441">
    <property type="entry name" value="Protein_kinase_ATP_BS"/>
</dbReference>
<dbReference type="InterPro" id="IPR001245">
    <property type="entry name" value="Ser-Thr/Tyr_kinase_cat_dom"/>
</dbReference>
<dbReference type="InterPro" id="IPR008271">
    <property type="entry name" value="Ser/Thr_kinase_AS"/>
</dbReference>
<dbReference type="PANTHER" id="PTHR47983:SF47">
    <property type="entry name" value="PROTEIN KINASE DOMAIN-CONTAINING PROTEIN"/>
    <property type="match status" value="1"/>
</dbReference>
<dbReference type="PANTHER" id="PTHR47983">
    <property type="entry name" value="PTO-INTERACTING PROTEIN 1-LIKE"/>
    <property type="match status" value="1"/>
</dbReference>
<dbReference type="Pfam" id="PF07714">
    <property type="entry name" value="PK_Tyr_Ser-Thr"/>
    <property type="match status" value="1"/>
</dbReference>
<dbReference type="SMART" id="SM00220">
    <property type="entry name" value="S_TKc"/>
    <property type="match status" value="1"/>
</dbReference>
<dbReference type="SUPFAM" id="SSF56112">
    <property type="entry name" value="Protein kinase-like (PK-like)"/>
    <property type="match status" value="1"/>
</dbReference>
<dbReference type="PROSITE" id="PS00107">
    <property type="entry name" value="PROTEIN_KINASE_ATP"/>
    <property type="match status" value="1"/>
</dbReference>
<dbReference type="PROSITE" id="PS50011">
    <property type="entry name" value="PROTEIN_KINASE_DOM"/>
    <property type="match status" value="1"/>
</dbReference>
<dbReference type="PROSITE" id="PS00108">
    <property type="entry name" value="PROTEIN_KINASE_ST"/>
    <property type="match status" value="1"/>
</dbReference>
<protein>
    <recommendedName>
        <fullName>Probable receptor-like protein kinase At2g47060</fullName>
        <ecNumber>2.7.11.1</ecNumber>
    </recommendedName>
</protein>
<name>Y2706_ARATH</name>